<sequence>MKHVLKNDWGPLLAPEFEKEYYRELDVFLKEEYSIHVVYPKIEDIFNALEYTSYENTKVVILGQDPYHGPNQAHGLSFSVQPGVKTPPSLLNMYKELRDEYGYDIPNNGYLVKWAEQGVLLLNTVLTVRQGEANSHKGKGWEHFTDRVIELLNEREKPVIFILWGRHAQAKKKLITNSNHHIIESVHPSPLSARRGFFGSKPYSKVNTILANMGEREIDWEIPNL</sequence>
<feature type="chain" id="PRO_1000009865" description="Uracil-DNA glycosylase">
    <location>
        <begin position="1"/>
        <end position="225"/>
    </location>
</feature>
<feature type="active site" description="Proton acceptor" evidence="1">
    <location>
        <position position="65"/>
    </location>
</feature>
<gene>
    <name evidence="1" type="primary">ung</name>
    <name type="ordered locus">BALH_4898</name>
</gene>
<dbReference type="EC" id="3.2.2.27" evidence="1"/>
<dbReference type="EMBL" id="CP000485">
    <property type="protein sequence ID" value="ABK88074.1"/>
    <property type="molecule type" value="Genomic_DNA"/>
</dbReference>
<dbReference type="RefSeq" id="WP_000683466.1">
    <property type="nucleotide sequence ID" value="NC_008600.1"/>
</dbReference>
<dbReference type="SMR" id="A0RLI1"/>
<dbReference type="KEGG" id="btl:BALH_4898"/>
<dbReference type="HOGENOM" id="CLU_032162_3_0_9"/>
<dbReference type="GO" id="GO:0005737">
    <property type="term" value="C:cytoplasm"/>
    <property type="evidence" value="ECO:0007669"/>
    <property type="project" value="UniProtKB-SubCell"/>
</dbReference>
<dbReference type="GO" id="GO:0004844">
    <property type="term" value="F:uracil DNA N-glycosylase activity"/>
    <property type="evidence" value="ECO:0007669"/>
    <property type="project" value="UniProtKB-UniRule"/>
</dbReference>
<dbReference type="GO" id="GO:0097510">
    <property type="term" value="P:base-excision repair, AP site formation via deaminated base removal"/>
    <property type="evidence" value="ECO:0007669"/>
    <property type="project" value="TreeGrafter"/>
</dbReference>
<dbReference type="CDD" id="cd10027">
    <property type="entry name" value="UDG-F1-like"/>
    <property type="match status" value="1"/>
</dbReference>
<dbReference type="FunFam" id="3.40.470.10:FF:000001">
    <property type="entry name" value="Uracil-DNA glycosylase"/>
    <property type="match status" value="1"/>
</dbReference>
<dbReference type="Gene3D" id="3.40.470.10">
    <property type="entry name" value="Uracil-DNA glycosylase-like domain"/>
    <property type="match status" value="1"/>
</dbReference>
<dbReference type="HAMAP" id="MF_00148">
    <property type="entry name" value="UDG"/>
    <property type="match status" value="1"/>
</dbReference>
<dbReference type="InterPro" id="IPR002043">
    <property type="entry name" value="UDG_fam1"/>
</dbReference>
<dbReference type="InterPro" id="IPR018085">
    <property type="entry name" value="Ura-DNA_Glyclase_AS"/>
</dbReference>
<dbReference type="InterPro" id="IPR005122">
    <property type="entry name" value="Uracil-DNA_glycosylase-like"/>
</dbReference>
<dbReference type="InterPro" id="IPR036895">
    <property type="entry name" value="Uracil-DNA_glycosylase-like_sf"/>
</dbReference>
<dbReference type="NCBIfam" id="NF003588">
    <property type="entry name" value="PRK05254.1-1"/>
    <property type="match status" value="1"/>
</dbReference>
<dbReference type="NCBIfam" id="NF003589">
    <property type="entry name" value="PRK05254.1-2"/>
    <property type="match status" value="1"/>
</dbReference>
<dbReference type="NCBIfam" id="NF003591">
    <property type="entry name" value="PRK05254.1-4"/>
    <property type="match status" value="1"/>
</dbReference>
<dbReference type="NCBIfam" id="NF003592">
    <property type="entry name" value="PRK05254.1-5"/>
    <property type="match status" value="1"/>
</dbReference>
<dbReference type="NCBIfam" id="TIGR00628">
    <property type="entry name" value="ung"/>
    <property type="match status" value="1"/>
</dbReference>
<dbReference type="PANTHER" id="PTHR11264">
    <property type="entry name" value="URACIL-DNA GLYCOSYLASE"/>
    <property type="match status" value="1"/>
</dbReference>
<dbReference type="PANTHER" id="PTHR11264:SF0">
    <property type="entry name" value="URACIL-DNA GLYCOSYLASE"/>
    <property type="match status" value="1"/>
</dbReference>
<dbReference type="Pfam" id="PF03167">
    <property type="entry name" value="UDG"/>
    <property type="match status" value="1"/>
</dbReference>
<dbReference type="SMART" id="SM00986">
    <property type="entry name" value="UDG"/>
    <property type="match status" value="1"/>
</dbReference>
<dbReference type="SMART" id="SM00987">
    <property type="entry name" value="UreE_C"/>
    <property type="match status" value="1"/>
</dbReference>
<dbReference type="SUPFAM" id="SSF52141">
    <property type="entry name" value="Uracil-DNA glycosylase-like"/>
    <property type="match status" value="1"/>
</dbReference>
<dbReference type="PROSITE" id="PS00130">
    <property type="entry name" value="U_DNA_GLYCOSYLASE"/>
    <property type="match status" value="1"/>
</dbReference>
<organism>
    <name type="scientific">Bacillus thuringiensis (strain Al Hakam)</name>
    <dbReference type="NCBI Taxonomy" id="412694"/>
    <lineage>
        <taxon>Bacteria</taxon>
        <taxon>Bacillati</taxon>
        <taxon>Bacillota</taxon>
        <taxon>Bacilli</taxon>
        <taxon>Bacillales</taxon>
        <taxon>Bacillaceae</taxon>
        <taxon>Bacillus</taxon>
        <taxon>Bacillus cereus group</taxon>
    </lineage>
</organism>
<name>UNG_BACAH</name>
<keyword id="KW-0963">Cytoplasm</keyword>
<keyword id="KW-0227">DNA damage</keyword>
<keyword id="KW-0234">DNA repair</keyword>
<keyword id="KW-0378">Hydrolase</keyword>
<accession>A0RLI1</accession>
<evidence type="ECO:0000255" key="1">
    <source>
        <dbReference type="HAMAP-Rule" id="MF_00148"/>
    </source>
</evidence>
<proteinExistence type="inferred from homology"/>
<reference key="1">
    <citation type="journal article" date="2007" name="J. Bacteriol.">
        <title>The complete genome sequence of Bacillus thuringiensis Al Hakam.</title>
        <authorList>
            <person name="Challacombe J.F."/>
            <person name="Altherr M.R."/>
            <person name="Xie G."/>
            <person name="Bhotika S.S."/>
            <person name="Brown N."/>
            <person name="Bruce D."/>
            <person name="Campbell C.S."/>
            <person name="Campbell M.L."/>
            <person name="Chen J."/>
            <person name="Chertkov O."/>
            <person name="Cleland C."/>
            <person name="Dimitrijevic M."/>
            <person name="Doggett N.A."/>
            <person name="Fawcett J.J."/>
            <person name="Glavina T."/>
            <person name="Goodwin L.A."/>
            <person name="Green L.D."/>
            <person name="Han C.S."/>
            <person name="Hill K.K."/>
            <person name="Hitchcock P."/>
            <person name="Jackson P.J."/>
            <person name="Keim P."/>
            <person name="Kewalramani A.R."/>
            <person name="Longmire J."/>
            <person name="Lucas S."/>
            <person name="Malfatti S."/>
            <person name="Martinez D."/>
            <person name="McMurry K."/>
            <person name="Meincke L.J."/>
            <person name="Misra M."/>
            <person name="Moseman B.L."/>
            <person name="Mundt M."/>
            <person name="Munk A.C."/>
            <person name="Okinaka R.T."/>
            <person name="Parson-Quintana B."/>
            <person name="Reilly L.P."/>
            <person name="Richardson P."/>
            <person name="Robinson D.L."/>
            <person name="Saunders E."/>
            <person name="Tapia R."/>
            <person name="Tesmer J.G."/>
            <person name="Thayer N."/>
            <person name="Thompson L.S."/>
            <person name="Tice H."/>
            <person name="Ticknor L.O."/>
            <person name="Wills P.L."/>
            <person name="Gilna P."/>
            <person name="Brettin T.S."/>
        </authorList>
    </citation>
    <scope>NUCLEOTIDE SEQUENCE [LARGE SCALE GENOMIC DNA]</scope>
    <source>
        <strain>Al Hakam</strain>
    </source>
</reference>
<protein>
    <recommendedName>
        <fullName evidence="1">Uracil-DNA glycosylase</fullName>
        <shortName evidence="1">UDG</shortName>
        <ecNumber evidence="1">3.2.2.27</ecNumber>
    </recommendedName>
</protein>
<comment type="function">
    <text evidence="1">Excises uracil residues from the DNA which can arise as a result of misincorporation of dUMP residues by DNA polymerase or due to deamination of cytosine.</text>
</comment>
<comment type="catalytic activity">
    <reaction evidence="1">
        <text>Hydrolyzes single-stranded DNA or mismatched double-stranded DNA and polynucleotides, releasing free uracil.</text>
        <dbReference type="EC" id="3.2.2.27"/>
    </reaction>
</comment>
<comment type="subcellular location">
    <subcellularLocation>
        <location evidence="1">Cytoplasm</location>
    </subcellularLocation>
</comment>
<comment type="similarity">
    <text evidence="1">Belongs to the uracil-DNA glycosylase (UDG) superfamily. UNG family.</text>
</comment>